<dbReference type="EC" id="2.4.1.82"/>
<dbReference type="EMBL" id="AP003282">
    <property type="protein sequence ID" value="BAD68247.1"/>
    <property type="molecule type" value="Genomic_DNA"/>
</dbReference>
<dbReference type="EMBL" id="AP003339">
    <property type="protein sequence ID" value="BAD68321.1"/>
    <property type="molecule type" value="Genomic_DNA"/>
</dbReference>
<dbReference type="EMBL" id="AP008207">
    <property type="protein sequence ID" value="BAF04051.1"/>
    <property type="status" value="ALT_SEQ"/>
    <property type="molecule type" value="Genomic_DNA"/>
</dbReference>
<dbReference type="EMBL" id="AP014957">
    <property type="status" value="NOT_ANNOTATED_CDS"/>
    <property type="molecule type" value="Genomic_DNA"/>
</dbReference>
<dbReference type="EMBL" id="CM000138">
    <property type="protein sequence ID" value="EAZ10704.1"/>
    <property type="molecule type" value="Genomic_DNA"/>
</dbReference>
<dbReference type="SMR" id="Q5VQG4"/>
<dbReference type="FunCoup" id="Q5VQG4">
    <property type="interactions" value="225"/>
</dbReference>
<dbReference type="STRING" id="39947.Q5VQG4"/>
<dbReference type="PaxDb" id="39947-Q5VQG4"/>
<dbReference type="KEGG" id="dosa:Os01g0170000"/>
<dbReference type="eggNOG" id="ENOG502QTKB">
    <property type="taxonomic scope" value="Eukaryota"/>
</dbReference>
<dbReference type="HOGENOM" id="CLU_051121_0_0_1"/>
<dbReference type="InParanoid" id="Q5VQG4"/>
<dbReference type="PlantReactome" id="R-OSA-1119417">
    <property type="pathway name" value="Stachyose biosynthesis"/>
</dbReference>
<dbReference type="Proteomes" id="UP000000763">
    <property type="component" value="Chromosome 1"/>
</dbReference>
<dbReference type="Proteomes" id="UP000007752">
    <property type="component" value="Chromosome 1"/>
</dbReference>
<dbReference type="Proteomes" id="UP000059680">
    <property type="component" value="Chromosome 1"/>
</dbReference>
<dbReference type="GO" id="GO:0047274">
    <property type="term" value="F:galactinol-sucrose galactosyltransferase activity"/>
    <property type="evidence" value="ECO:0000314"/>
    <property type="project" value="Gramene"/>
</dbReference>
<dbReference type="FunFam" id="3.20.20.70:FF:000311">
    <property type="entry name" value="Probable galactinol--sucrose galactosyltransferase 5"/>
    <property type="match status" value="1"/>
</dbReference>
<dbReference type="Gene3D" id="3.20.20.70">
    <property type="entry name" value="Aldolase class I"/>
    <property type="match status" value="1"/>
</dbReference>
<dbReference type="InterPro" id="IPR013785">
    <property type="entry name" value="Aldolase_TIM"/>
</dbReference>
<dbReference type="InterPro" id="IPR017853">
    <property type="entry name" value="Glycoside_hydrolase_SF"/>
</dbReference>
<dbReference type="InterPro" id="IPR008811">
    <property type="entry name" value="Glycosyl_hydrolases_36"/>
</dbReference>
<dbReference type="PANTHER" id="PTHR31268">
    <property type="match status" value="1"/>
</dbReference>
<dbReference type="PANTHER" id="PTHR31268:SF37">
    <property type="entry name" value="GALACTINOL--SUCROSE GALACTOSYLTRANSFERASE"/>
    <property type="match status" value="1"/>
</dbReference>
<dbReference type="Pfam" id="PF05691">
    <property type="entry name" value="Raffinose_syn"/>
    <property type="match status" value="1"/>
</dbReference>
<dbReference type="SUPFAM" id="SSF51445">
    <property type="entry name" value="(Trans)glycosidases"/>
    <property type="match status" value="1"/>
</dbReference>
<proteinExistence type="evidence at protein level"/>
<accession>Q5VQG4</accession>
<accession>Q0JQC7</accession>
<keyword id="KW-0119">Carbohydrate metabolism</keyword>
<keyword id="KW-0903">Direct protein sequencing</keyword>
<keyword id="KW-0328">Glycosyltransferase</keyword>
<keyword id="KW-1185">Reference proteome</keyword>
<keyword id="KW-0808">Transferase</keyword>
<gene>
    <name type="primary">RFS</name>
    <name type="ordered locus">Os01g0170000</name>
    <name type="ordered locus">LOC_Os01g07530</name>
    <name type="ORF">OJ1276_B06.38</name>
    <name type="ORF">OsJ_00538</name>
    <name type="ORF">P0583G08.2</name>
</gene>
<name>RFS_ORYSJ</name>
<sequence length="783" mass="85533">MAPNLSKAKDDLIGDVVAVDGLIKPPRFTLKGKDLAVDGHPFLLDVPANIRLTPASTLVPNSDVPAAAAGSFLGFDAPAAKDRHVVPIGKLRDTRFMSIFRFKVWWTTHWVGTNGRDVENETQMMILDQSGTKSSPTGPRPYVLLLPIVEGPFRACLESGKAEDYVHMVLESGSSTVRGSVFRSAVYLHAGDDPFDLVKDAMRVVRAHLGTFRLMEEKTPPPIVDKFGWCTWDAFYLKVHPEGVWEGVRRLADGGCPPGLVLIDDGWQSICHDDDDLGSGAEGMNRTSAGEQMPCRLIKFQENYKFREYKGGMGGFVREMKAAFPTVEQVYVWHALCGYWGGLRPGAPGLPPAKVVAPRLSPGLQRTMEDLAVDKIVNNGVGLVDPRRARELYEGLHSHLQASGIDGVKVDVIHLLEMVCEEYGGRVELAKAYFAGLTESVRRHFNGNGVIASMEHCNDFMLLGTEAVALGRVGDDFWCTDPSGDPDGTFWLQGCHMVHCAYNSLWMGAFIHPDWDMFQSTHPCAAFHAASRAVSGGPVYVSDAVGCHDFDLLRRLALPDGTILRCERYALPTRDCLFADPLHDGKTMLKIWNVNKFSGVLGAFNCQGGGWSREARRNMCAAGFSVPVTARASPADVEWSHGGGGGDRFAVYFVEARKLQLLRRDESVELTLEPFTYELLVVAPVRAIVSPELGIGFAPIGLANMLNAGGAVQGFEAARKDGDVAAEVAVKGAGEMVAYSSARPRLCKVNGQDAEFKYEDGIVTVDVPWTGSSKKLSRVEYFY</sequence>
<evidence type="ECO:0000269" key="1">
    <source>
    </source>
</evidence>
<evidence type="ECO:0000305" key="2"/>
<evidence type="ECO:0000305" key="3">
    <source>
    </source>
</evidence>
<organism>
    <name type="scientific">Oryza sativa subsp. japonica</name>
    <name type="common">Rice</name>
    <dbReference type="NCBI Taxonomy" id="39947"/>
    <lineage>
        <taxon>Eukaryota</taxon>
        <taxon>Viridiplantae</taxon>
        <taxon>Streptophyta</taxon>
        <taxon>Embryophyta</taxon>
        <taxon>Tracheophyta</taxon>
        <taxon>Spermatophyta</taxon>
        <taxon>Magnoliopsida</taxon>
        <taxon>Liliopsida</taxon>
        <taxon>Poales</taxon>
        <taxon>Poaceae</taxon>
        <taxon>BOP clade</taxon>
        <taxon>Oryzoideae</taxon>
        <taxon>Oryzeae</taxon>
        <taxon>Oryzinae</taxon>
        <taxon>Oryza</taxon>
        <taxon>Oryza sativa</taxon>
    </lineage>
</organism>
<comment type="function">
    <text evidence="1">Transglycosidase operating by a ping-pong reaction mechanism. Involved in the synthesis of raffinose, a major soluble carbohydrate in seeds, roots and tubers. Specific for galactinol and p-nitrophenyl-alpha-D-galactoside as galactosyl donors. Able to utilize sucrose, lactose, 4-beta-galactobiose, N-acetyl-D-lactosamine, trehalose and lacto-N-biose as acceptors. May also act as a glycoside hydrolase.</text>
</comment>
<comment type="catalytic activity">
    <reaction evidence="1">
        <text>alpha-D-galactosyl-(1-&gt;3)-1D-myo-inositol + sucrose = raffinose + myo-inositol</text>
        <dbReference type="Rhea" id="RHEA:20161"/>
        <dbReference type="ChEBI" id="CHEBI:16634"/>
        <dbReference type="ChEBI" id="CHEBI:17268"/>
        <dbReference type="ChEBI" id="CHEBI:17505"/>
        <dbReference type="ChEBI" id="CHEBI:17992"/>
        <dbReference type="EC" id="2.4.1.82"/>
    </reaction>
</comment>
<comment type="activity regulation">
    <text>Inhibited by Ag(2)+, Hg(2+), Zn(2+), p-chloromercuribenzoate (pCMB) and 1-deoxygalactonojirimycin.</text>
</comment>
<comment type="biophysicochemical properties">
    <kinetics>
        <Vmax evidence="1">25.6 nmol/sec/mg enzyme toward raffinose for the raffinose synthesis activity</Vmax>
        <Vmax evidence="1">6.8 nmol/sec/mg enzyme toward p-nitrophenyl-alpha-D-galactoside for the hydrolysis activity</Vmax>
        <Vmax evidence="1">8.5 nmol/sec/mg enzyme toward galactinol for the hydrolysis activity</Vmax>
        <Vmax evidence="1">5.7 nmol/sec/mg enzyme toward raffinose for the hydrolysis activity</Vmax>
    </kinetics>
    <phDependence>
        <text evidence="1">Optimum pH is 7.0.</text>
    </phDependence>
    <temperatureDependence>
        <text evidence="1">Optimum temperature is 45 degrees Celsius.</text>
    </temperatureDependence>
</comment>
<comment type="similarity">
    <text evidence="2">Belongs to the glycosyl hydrolases 36 family.</text>
</comment>
<comment type="sequence caution" evidence="2">
    <conflict type="erroneous gene model prediction">
        <sequence resource="EMBL-CDS" id="BAF04051"/>
    </conflict>
</comment>
<protein>
    <recommendedName>
        <fullName>Galactinol--sucrose galactosyltransferase</fullName>
        <ecNumber>2.4.1.82</ecNumber>
    </recommendedName>
    <alternativeName>
        <fullName>Raffinose synthase</fullName>
    </alternativeName>
</protein>
<feature type="initiator methionine" description="Removed" evidence="3">
    <location>
        <position position="1"/>
    </location>
</feature>
<feature type="chain" id="PRO_0000389255" description="Galactinol--sucrose galactosyltransferase">
    <location>
        <begin position="2"/>
        <end position="783"/>
    </location>
</feature>
<reference key="1">
    <citation type="journal article" date="2007" name="Biotechnol. Lett.">
        <title>Characterization of raffinose synthase from rice (Oryza sativa L. var. Nipponbare).</title>
        <authorList>
            <person name="Li S."/>
            <person name="Li T."/>
            <person name="Kim W.-D."/>
            <person name="Kitaoka M."/>
            <person name="Yoshida S."/>
            <person name="Nakajima M."/>
            <person name="Kobayashi H."/>
        </authorList>
    </citation>
    <scope>NUCLEOTIDE SEQUENCE [MRNA]</scope>
    <scope>PROTEIN SEQUENCE OF 2-11</scope>
    <scope>FUNCTION</scope>
    <scope>CATALYTIC ACTIVITY</scope>
    <scope>BIOPHYSICOCHEMICAL PROPERTIES</scope>
</reference>
<reference key="2">
    <citation type="journal article" date="2002" name="Nature">
        <title>The genome sequence and structure of rice chromosome 1.</title>
        <authorList>
            <person name="Sasaki T."/>
            <person name="Matsumoto T."/>
            <person name="Yamamoto K."/>
            <person name="Sakata K."/>
            <person name="Baba T."/>
            <person name="Katayose Y."/>
            <person name="Wu J."/>
            <person name="Niimura Y."/>
            <person name="Cheng Z."/>
            <person name="Nagamura Y."/>
            <person name="Antonio B.A."/>
            <person name="Kanamori H."/>
            <person name="Hosokawa S."/>
            <person name="Masukawa M."/>
            <person name="Arikawa K."/>
            <person name="Chiden Y."/>
            <person name="Hayashi M."/>
            <person name="Okamoto M."/>
            <person name="Ando T."/>
            <person name="Aoki H."/>
            <person name="Arita K."/>
            <person name="Hamada M."/>
            <person name="Harada C."/>
            <person name="Hijishita S."/>
            <person name="Honda M."/>
            <person name="Ichikawa Y."/>
            <person name="Idonuma A."/>
            <person name="Iijima M."/>
            <person name="Ikeda M."/>
            <person name="Ikeno M."/>
            <person name="Ito S."/>
            <person name="Ito T."/>
            <person name="Ito Y."/>
            <person name="Ito Y."/>
            <person name="Iwabuchi A."/>
            <person name="Kamiya K."/>
            <person name="Karasawa W."/>
            <person name="Katagiri S."/>
            <person name="Kikuta A."/>
            <person name="Kobayashi N."/>
            <person name="Kono I."/>
            <person name="Machita K."/>
            <person name="Maehara T."/>
            <person name="Mizuno H."/>
            <person name="Mizubayashi T."/>
            <person name="Mukai Y."/>
            <person name="Nagasaki H."/>
            <person name="Nakashima M."/>
            <person name="Nakama Y."/>
            <person name="Nakamichi Y."/>
            <person name="Nakamura M."/>
            <person name="Namiki N."/>
            <person name="Negishi M."/>
            <person name="Ohta I."/>
            <person name="Ono N."/>
            <person name="Saji S."/>
            <person name="Sakai K."/>
            <person name="Shibata M."/>
            <person name="Shimokawa T."/>
            <person name="Shomura A."/>
            <person name="Song J."/>
            <person name="Takazaki Y."/>
            <person name="Terasawa K."/>
            <person name="Tsuji K."/>
            <person name="Waki K."/>
            <person name="Yamagata H."/>
            <person name="Yamane H."/>
            <person name="Yoshiki S."/>
            <person name="Yoshihara R."/>
            <person name="Yukawa K."/>
            <person name="Zhong H."/>
            <person name="Iwama H."/>
            <person name="Endo T."/>
            <person name="Ito H."/>
            <person name="Hahn J.H."/>
            <person name="Kim H.-I."/>
            <person name="Eun M.-Y."/>
            <person name="Yano M."/>
            <person name="Jiang J."/>
            <person name="Gojobori T."/>
        </authorList>
    </citation>
    <scope>NUCLEOTIDE SEQUENCE [LARGE SCALE GENOMIC DNA]</scope>
    <source>
        <strain>cv. Nipponbare</strain>
    </source>
</reference>
<reference key="3">
    <citation type="journal article" date="2005" name="Nature">
        <title>The map-based sequence of the rice genome.</title>
        <authorList>
            <consortium name="International rice genome sequencing project (IRGSP)"/>
        </authorList>
    </citation>
    <scope>NUCLEOTIDE SEQUENCE [LARGE SCALE GENOMIC DNA]</scope>
    <source>
        <strain>cv. Nipponbare</strain>
    </source>
</reference>
<reference key="4">
    <citation type="journal article" date="2008" name="Nucleic Acids Res.">
        <title>The rice annotation project database (RAP-DB): 2008 update.</title>
        <authorList>
            <consortium name="The rice annotation project (RAP)"/>
        </authorList>
    </citation>
    <scope>GENOME REANNOTATION</scope>
    <source>
        <strain>cv. Nipponbare</strain>
    </source>
</reference>
<reference key="5">
    <citation type="journal article" date="2013" name="Rice">
        <title>Improvement of the Oryza sativa Nipponbare reference genome using next generation sequence and optical map data.</title>
        <authorList>
            <person name="Kawahara Y."/>
            <person name="de la Bastide M."/>
            <person name="Hamilton J.P."/>
            <person name="Kanamori H."/>
            <person name="McCombie W.R."/>
            <person name="Ouyang S."/>
            <person name="Schwartz D.C."/>
            <person name="Tanaka T."/>
            <person name="Wu J."/>
            <person name="Zhou S."/>
            <person name="Childs K.L."/>
            <person name="Davidson R.M."/>
            <person name="Lin H."/>
            <person name="Quesada-Ocampo L."/>
            <person name="Vaillancourt B."/>
            <person name="Sakai H."/>
            <person name="Lee S.S."/>
            <person name="Kim J."/>
            <person name="Numa H."/>
            <person name="Itoh T."/>
            <person name="Buell C.R."/>
            <person name="Matsumoto T."/>
        </authorList>
    </citation>
    <scope>GENOME REANNOTATION</scope>
    <source>
        <strain>cv. Nipponbare</strain>
    </source>
</reference>
<reference key="6">
    <citation type="journal article" date="2005" name="PLoS Biol.">
        <title>The genomes of Oryza sativa: a history of duplications.</title>
        <authorList>
            <person name="Yu J."/>
            <person name="Wang J."/>
            <person name="Lin W."/>
            <person name="Li S."/>
            <person name="Li H."/>
            <person name="Zhou J."/>
            <person name="Ni P."/>
            <person name="Dong W."/>
            <person name="Hu S."/>
            <person name="Zeng C."/>
            <person name="Zhang J."/>
            <person name="Zhang Y."/>
            <person name="Li R."/>
            <person name="Xu Z."/>
            <person name="Li S."/>
            <person name="Li X."/>
            <person name="Zheng H."/>
            <person name="Cong L."/>
            <person name="Lin L."/>
            <person name="Yin J."/>
            <person name="Geng J."/>
            <person name="Li G."/>
            <person name="Shi J."/>
            <person name="Liu J."/>
            <person name="Lv H."/>
            <person name="Li J."/>
            <person name="Wang J."/>
            <person name="Deng Y."/>
            <person name="Ran L."/>
            <person name="Shi X."/>
            <person name="Wang X."/>
            <person name="Wu Q."/>
            <person name="Li C."/>
            <person name="Ren X."/>
            <person name="Wang J."/>
            <person name="Wang X."/>
            <person name="Li D."/>
            <person name="Liu D."/>
            <person name="Zhang X."/>
            <person name="Ji Z."/>
            <person name="Zhao W."/>
            <person name="Sun Y."/>
            <person name="Zhang Z."/>
            <person name="Bao J."/>
            <person name="Han Y."/>
            <person name="Dong L."/>
            <person name="Ji J."/>
            <person name="Chen P."/>
            <person name="Wu S."/>
            <person name="Liu J."/>
            <person name="Xiao Y."/>
            <person name="Bu D."/>
            <person name="Tan J."/>
            <person name="Yang L."/>
            <person name="Ye C."/>
            <person name="Zhang J."/>
            <person name="Xu J."/>
            <person name="Zhou Y."/>
            <person name="Yu Y."/>
            <person name="Zhang B."/>
            <person name="Zhuang S."/>
            <person name="Wei H."/>
            <person name="Liu B."/>
            <person name="Lei M."/>
            <person name="Yu H."/>
            <person name="Li Y."/>
            <person name="Xu H."/>
            <person name="Wei S."/>
            <person name="He X."/>
            <person name="Fang L."/>
            <person name="Zhang Z."/>
            <person name="Zhang Y."/>
            <person name="Huang X."/>
            <person name="Su Z."/>
            <person name="Tong W."/>
            <person name="Li J."/>
            <person name="Tong Z."/>
            <person name="Li S."/>
            <person name="Ye J."/>
            <person name="Wang L."/>
            <person name="Fang L."/>
            <person name="Lei T."/>
            <person name="Chen C.-S."/>
            <person name="Chen H.-C."/>
            <person name="Xu Z."/>
            <person name="Li H."/>
            <person name="Huang H."/>
            <person name="Zhang F."/>
            <person name="Xu H."/>
            <person name="Li N."/>
            <person name="Zhao C."/>
            <person name="Li S."/>
            <person name="Dong L."/>
            <person name="Huang Y."/>
            <person name="Li L."/>
            <person name="Xi Y."/>
            <person name="Qi Q."/>
            <person name="Li W."/>
            <person name="Zhang B."/>
            <person name="Hu W."/>
            <person name="Zhang Y."/>
            <person name="Tian X."/>
            <person name="Jiao Y."/>
            <person name="Liang X."/>
            <person name="Jin J."/>
            <person name="Gao L."/>
            <person name="Zheng W."/>
            <person name="Hao B."/>
            <person name="Liu S.-M."/>
            <person name="Wang W."/>
            <person name="Yuan L."/>
            <person name="Cao M."/>
            <person name="McDermott J."/>
            <person name="Samudrala R."/>
            <person name="Wang J."/>
            <person name="Wong G.K.-S."/>
            <person name="Yang H."/>
        </authorList>
    </citation>
    <scope>NUCLEOTIDE SEQUENCE [LARGE SCALE GENOMIC DNA]</scope>
    <source>
        <strain>cv. Nipponbare</strain>
    </source>
</reference>